<organism>
    <name type="scientific">Streptococcus pneumoniae (strain JJA)</name>
    <dbReference type="NCBI Taxonomy" id="488222"/>
    <lineage>
        <taxon>Bacteria</taxon>
        <taxon>Bacillati</taxon>
        <taxon>Bacillota</taxon>
        <taxon>Bacilli</taxon>
        <taxon>Lactobacillales</taxon>
        <taxon>Streptococcaceae</taxon>
        <taxon>Streptococcus</taxon>
    </lineage>
</organism>
<name>RNPA_STRZJ</name>
<reference key="1">
    <citation type="journal article" date="2010" name="Genome Biol.">
        <title>Structure and dynamics of the pan-genome of Streptococcus pneumoniae and closely related species.</title>
        <authorList>
            <person name="Donati C."/>
            <person name="Hiller N.L."/>
            <person name="Tettelin H."/>
            <person name="Muzzi A."/>
            <person name="Croucher N.J."/>
            <person name="Angiuoli S.V."/>
            <person name="Oggioni M."/>
            <person name="Dunning Hotopp J.C."/>
            <person name="Hu F.Z."/>
            <person name="Riley D.R."/>
            <person name="Covacci A."/>
            <person name="Mitchell T.J."/>
            <person name="Bentley S.D."/>
            <person name="Kilian M."/>
            <person name="Ehrlich G.D."/>
            <person name="Rappuoli R."/>
            <person name="Moxon E.R."/>
            <person name="Masignani V."/>
        </authorList>
    </citation>
    <scope>NUCLEOTIDE SEQUENCE [LARGE SCALE GENOMIC DNA]</scope>
    <source>
        <strain>JJA</strain>
    </source>
</reference>
<accession>C1CGX2</accession>
<evidence type="ECO:0000255" key="1">
    <source>
        <dbReference type="HAMAP-Rule" id="MF_00227"/>
    </source>
</evidence>
<dbReference type="EC" id="3.1.26.5" evidence="1"/>
<dbReference type="EMBL" id="CP000919">
    <property type="protein sequence ID" value="ACO18916.1"/>
    <property type="molecule type" value="Genomic_DNA"/>
</dbReference>
<dbReference type="RefSeq" id="WP_000739246.1">
    <property type="nucleotide sequence ID" value="NC_012466.1"/>
</dbReference>
<dbReference type="SMR" id="C1CGX2"/>
<dbReference type="GeneID" id="45652735"/>
<dbReference type="KEGG" id="sjj:SPJ_2048"/>
<dbReference type="HOGENOM" id="CLU_117179_9_1_9"/>
<dbReference type="Proteomes" id="UP000002206">
    <property type="component" value="Chromosome"/>
</dbReference>
<dbReference type="GO" id="GO:0030677">
    <property type="term" value="C:ribonuclease P complex"/>
    <property type="evidence" value="ECO:0007669"/>
    <property type="project" value="TreeGrafter"/>
</dbReference>
<dbReference type="GO" id="GO:0042781">
    <property type="term" value="F:3'-tRNA processing endoribonuclease activity"/>
    <property type="evidence" value="ECO:0007669"/>
    <property type="project" value="TreeGrafter"/>
</dbReference>
<dbReference type="GO" id="GO:0004526">
    <property type="term" value="F:ribonuclease P activity"/>
    <property type="evidence" value="ECO:0007669"/>
    <property type="project" value="UniProtKB-UniRule"/>
</dbReference>
<dbReference type="GO" id="GO:0000049">
    <property type="term" value="F:tRNA binding"/>
    <property type="evidence" value="ECO:0007669"/>
    <property type="project" value="UniProtKB-UniRule"/>
</dbReference>
<dbReference type="GO" id="GO:0001682">
    <property type="term" value="P:tRNA 5'-leader removal"/>
    <property type="evidence" value="ECO:0007669"/>
    <property type="project" value="UniProtKB-UniRule"/>
</dbReference>
<dbReference type="FunFam" id="3.30.230.10:FF:000021">
    <property type="entry name" value="Ribonuclease P protein component"/>
    <property type="match status" value="1"/>
</dbReference>
<dbReference type="Gene3D" id="3.30.230.10">
    <property type="match status" value="1"/>
</dbReference>
<dbReference type="HAMAP" id="MF_00227">
    <property type="entry name" value="RNase_P"/>
    <property type="match status" value="1"/>
</dbReference>
<dbReference type="InterPro" id="IPR020568">
    <property type="entry name" value="Ribosomal_Su5_D2-typ_SF"/>
</dbReference>
<dbReference type="InterPro" id="IPR014721">
    <property type="entry name" value="Ribsml_uS5_D2-typ_fold_subgr"/>
</dbReference>
<dbReference type="InterPro" id="IPR000100">
    <property type="entry name" value="RNase_P"/>
</dbReference>
<dbReference type="InterPro" id="IPR020539">
    <property type="entry name" value="RNase_P_CS"/>
</dbReference>
<dbReference type="NCBIfam" id="TIGR00188">
    <property type="entry name" value="rnpA"/>
    <property type="match status" value="1"/>
</dbReference>
<dbReference type="PANTHER" id="PTHR33992">
    <property type="entry name" value="RIBONUCLEASE P PROTEIN COMPONENT"/>
    <property type="match status" value="1"/>
</dbReference>
<dbReference type="PANTHER" id="PTHR33992:SF1">
    <property type="entry name" value="RIBONUCLEASE P PROTEIN COMPONENT"/>
    <property type="match status" value="1"/>
</dbReference>
<dbReference type="Pfam" id="PF00825">
    <property type="entry name" value="Ribonuclease_P"/>
    <property type="match status" value="1"/>
</dbReference>
<dbReference type="SUPFAM" id="SSF54211">
    <property type="entry name" value="Ribosomal protein S5 domain 2-like"/>
    <property type="match status" value="1"/>
</dbReference>
<dbReference type="PROSITE" id="PS00648">
    <property type="entry name" value="RIBONUCLEASE_P"/>
    <property type="match status" value="1"/>
</dbReference>
<comment type="function">
    <text evidence="1">RNaseP catalyzes the removal of the 5'-leader sequence from pre-tRNA to produce the mature 5'-terminus. It can also cleave other RNA substrates such as 4.5S RNA. The protein component plays an auxiliary but essential role in vivo by binding to the 5'-leader sequence and broadening the substrate specificity of the ribozyme.</text>
</comment>
<comment type="catalytic activity">
    <reaction evidence="1">
        <text>Endonucleolytic cleavage of RNA, removing 5'-extranucleotides from tRNA precursor.</text>
        <dbReference type="EC" id="3.1.26.5"/>
    </reaction>
</comment>
<comment type="subunit">
    <text evidence="1">Consists of a catalytic RNA component (M1 or rnpB) and a protein subunit.</text>
</comment>
<comment type="similarity">
    <text evidence="1">Belongs to the RnpA family.</text>
</comment>
<feature type="chain" id="PRO_1000194676" description="Ribonuclease P protein component">
    <location>
        <begin position="1"/>
        <end position="123"/>
    </location>
</feature>
<sequence length="123" mass="14281">MKKNFRVKREKDFKAIFKEGTSFANRKFVVYQLENQKNHFRVGLSVSKKLGNAVTRNQIKRRIRHIIQNAKGSLVEDVDFVVIARKGVETLGYAEMEKNLLHVLKLSKIYREGNGSEKETKVD</sequence>
<protein>
    <recommendedName>
        <fullName evidence="1">Ribonuclease P protein component</fullName>
        <shortName evidence="1">RNase P protein</shortName>
        <shortName evidence="1">RNaseP protein</shortName>
        <ecNumber evidence="1">3.1.26.5</ecNumber>
    </recommendedName>
    <alternativeName>
        <fullName evidence="1">Protein C5</fullName>
    </alternativeName>
</protein>
<gene>
    <name evidence="1" type="primary">rnpA</name>
    <name type="ordered locus">SPJ_2048</name>
</gene>
<proteinExistence type="inferred from homology"/>
<keyword id="KW-0255">Endonuclease</keyword>
<keyword id="KW-0378">Hydrolase</keyword>
<keyword id="KW-0540">Nuclease</keyword>
<keyword id="KW-0694">RNA-binding</keyword>
<keyword id="KW-0819">tRNA processing</keyword>